<sequence length="132" mass="14806">MIQVEIVSPQGMVYSGEVESVNVPTVEGEVGILENHMYLMTLLKPGLVYFNGDDKNGIAVTYGVLDVTPQKVLILAEEAYEVGKLPPASKLKEEFEEAVKKMATAQTMEELKEWEKEAEKARTLLELVEKYR</sequence>
<comment type="function">
    <text evidence="1">Produces ATP from ADP in the presence of a proton gradient across the membrane.</text>
</comment>
<comment type="subunit">
    <text>F-type ATPases have 2 components, CF(1) - the catalytic core - and CF(0) - the membrane proton channel. CF(1) has five subunits: alpha(3), beta(3), gamma(1), delta(1), epsilon(1). CF(0) has three main subunits: a, b and c.</text>
</comment>
<comment type="subcellular location">
    <subcellularLocation>
        <location evidence="1">Cell inner membrane</location>
        <topology evidence="1">Peripheral membrane protein</topology>
    </subcellularLocation>
</comment>
<comment type="similarity">
    <text evidence="2">Belongs to the ATPase epsilon chain family.</text>
</comment>
<gene>
    <name type="primary">atpC</name>
    <name type="ordered locus">aq_673</name>
</gene>
<keyword id="KW-0066">ATP synthesis</keyword>
<keyword id="KW-0997">Cell inner membrane</keyword>
<keyword id="KW-1003">Cell membrane</keyword>
<keyword id="KW-0139">CF(1)</keyword>
<keyword id="KW-0375">Hydrogen ion transport</keyword>
<keyword id="KW-0406">Ion transport</keyword>
<keyword id="KW-0472">Membrane</keyword>
<keyword id="KW-1185">Reference proteome</keyword>
<keyword id="KW-0813">Transport</keyword>
<protein>
    <recommendedName>
        <fullName>ATP synthase epsilon chain</fullName>
    </recommendedName>
    <alternativeName>
        <fullName>ATP synthase F1 sector epsilon subunit</fullName>
    </alternativeName>
    <alternativeName>
        <fullName>F-ATPase epsilon subunit</fullName>
    </alternativeName>
</protein>
<reference key="1">
    <citation type="journal article" date="1998" name="Nature">
        <title>The complete genome of the hyperthermophilic bacterium Aquifex aeolicus.</title>
        <authorList>
            <person name="Deckert G."/>
            <person name="Warren P.V."/>
            <person name="Gaasterland T."/>
            <person name="Young W.G."/>
            <person name="Lenox A.L."/>
            <person name="Graham D.E."/>
            <person name="Overbeek R."/>
            <person name="Snead M.A."/>
            <person name="Keller M."/>
            <person name="Aujay M."/>
            <person name="Huber R."/>
            <person name="Feldman R.A."/>
            <person name="Short J.M."/>
            <person name="Olsen G.J."/>
            <person name="Swanson R.V."/>
        </authorList>
    </citation>
    <scope>NUCLEOTIDE SEQUENCE [LARGE SCALE GENOMIC DNA]</scope>
    <source>
        <strain>VF5</strain>
    </source>
</reference>
<dbReference type="EMBL" id="AE000657">
    <property type="protein sequence ID" value="AAC06856.1"/>
    <property type="molecule type" value="Genomic_DNA"/>
</dbReference>
<dbReference type="PIR" id="C70359">
    <property type="entry name" value="C70359"/>
</dbReference>
<dbReference type="RefSeq" id="NP_213463.1">
    <property type="nucleotide sequence ID" value="NC_000918.1"/>
</dbReference>
<dbReference type="RefSeq" id="WP_010880401.1">
    <property type="nucleotide sequence ID" value="NC_000918.1"/>
</dbReference>
<dbReference type="SMR" id="O66903"/>
<dbReference type="FunCoup" id="O66903">
    <property type="interactions" value="325"/>
</dbReference>
<dbReference type="STRING" id="224324.aq_673"/>
<dbReference type="EnsemblBacteria" id="AAC06856">
    <property type="protein sequence ID" value="AAC06856"/>
    <property type="gene ID" value="aq_673"/>
</dbReference>
<dbReference type="KEGG" id="aae:aq_673"/>
<dbReference type="eggNOG" id="COG0355">
    <property type="taxonomic scope" value="Bacteria"/>
</dbReference>
<dbReference type="HOGENOM" id="CLU_084338_1_2_0"/>
<dbReference type="InParanoid" id="O66903"/>
<dbReference type="OrthoDB" id="9804110at2"/>
<dbReference type="Proteomes" id="UP000000798">
    <property type="component" value="Chromosome"/>
</dbReference>
<dbReference type="GO" id="GO:0005886">
    <property type="term" value="C:plasma membrane"/>
    <property type="evidence" value="ECO:0007669"/>
    <property type="project" value="UniProtKB-SubCell"/>
</dbReference>
<dbReference type="GO" id="GO:0045259">
    <property type="term" value="C:proton-transporting ATP synthase complex"/>
    <property type="evidence" value="ECO:0007669"/>
    <property type="project" value="UniProtKB-KW"/>
</dbReference>
<dbReference type="GO" id="GO:0005524">
    <property type="term" value="F:ATP binding"/>
    <property type="evidence" value="ECO:0007669"/>
    <property type="project" value="UniProtKB-UniRule"/>
</dbReference>
<dbReference type="GO" id="GO:0046933">
    <property type="term" value="F:proton-transporting ATP synthase activity, rotational mechanism"/>
    <property type="evidence" value="ECO:0007669"/>
    <property type="project" value="UniProtKB-UniRule"/>
</dbReference>
<dbReference type="GO" id="GO:0015986">
    <property type="term" value="P:proton motive force-driven ATP synthesis"/>
    <property type="evidence" value="ECO:0000318"/>
    <property type="project" value="GO_Central"/>
</dbReference>
<dbReference type="CDD" id="cd12152">
    <property type="entry name" value="F1-ATPase_delta"/>
    <property type="match status" value="1"/>
</dbReference>
<dbReference type="Gene3D" id="2.60.15.10">
    <property type="entry name" value="F0F1 ATP synthase delta/epsilon subunit, N-terminal"/>
    <property type="match status" value="1"/>
</dbReference>
<dbReference type="HAMAP" id="MF_00530">
    <property type="entry name" value="ATP_synth_epsil_bac"/>
    <property type="match status" value="1"/>
</dbReference>
<dbReference type="InterPro" id="IPR001469">
    <property type="entry name" value="ATP_synth_F1_dsu/esu"/>
</dbReference>
<dbReference type="InterPro" id="IPR020546">
    <property type="entry name" value="ATP_synth_F1_dsu/esu_N"/>
</dbReference>
<dbReference type="InterPro" id="IPR036771">
    <property type="entry name" value="ATPsynth_dsu/esu_N"/>
</dbReference>
<dbReference type="NCBIfam" id="TIGR01216">
    <property type="entry name" value="ATP_synt_epsi"/>
    <property type="match status" value="1"/>
</dbReference>
<dbReference type="PANTHER" id="PTHR13822">
    <property type="entry name" value="ATP SYNTHASE DELTA/EPSILON CHAIN"/>
    <property type="match status" value="1"/>
</dbReference>
<dbReference type="PANTHER" id="PTHR13822:SF10">
    <property type="entry name" value="ATP SYNTHASE EPSILON CHAIN, CHLOROPLASTIC"/>
    <property type="match status" value="1"/>
</dbReference>
<dbReference type="Pfam" id="PF02823">
    <property type="entry name" value="ATP-synt_DE_N"/>
    <property type="match status" value="1"/>
</dbReference>
<dbReference type="SUPFAM" id="SSF51344">
    <property type="entry name" value="Epsilon subunit of F1F0-ATP synthase N-terminal domain"/>
    <property type="match status" value="1"/>
</dbReference>
<proteinExistence type="inferred from homology"/>
<feature type="chain" id="PRO_0000188088" description="ATP synthase epsilon chain">
    <location>
        <begin position="1"/>
        <end position="132"/>
    </location>
</feature>
<name>ATPE_AQUAE</name>
<accession>O66903</accession>
<organism>
    <name type="scientific">Aquifex aeolicus (strain VF5)</name>
    <dbReference type="NCBI Taxonomy" id="224324"/>
    <lineage>
        <taxon>Bacteria</taxon>
        <taxon>Pseudomonadati</taxon>
        <taxon>Aquificota</taxon>
        <taxon>Aquificia</taxon>
        <taxon>Aquificales</taxon>
        <taxon>Aquificaceae</taxon>
        <taxon>Aquifex</taxon>
    </lineage>
</organism>
<evidence type="ECO:0000250" key="1"/>
<evidence type="ECO:0000305" key="2"/>